<proteinExistence type="evidence at protein level"/>
<dbReference type="EC" id="5.4.3.8" evidence="2 3"/>
<dbReference type="EMBL" id="X53696">
    <property type="protein sequence ID" value="CAA37734.1"/>
    <property type="molecule type" value="Genomic_DNA"/>
</dbReference>
<dbReference type="EMBL" id="U00096">
    <property type="protein sequence ID" value="AAC73265.1"/>
    <property type="molecule type" value="Genomic_DNA"/>
</dbReference>
<dbReference type="EMBL" id="AP009048">
    <property type="protein sequence ID" value="BAB96731.2"/>
    <property type="molecule type" value="Genomic_DNA"/>
</dbReference>
<dbReference type="EMBL" id="U70214">
    <property type="protein sequence ID" value="AAB08584.1"/>
    <property type="molecule type" value="Genomic_DNA"/>
</dbReference>
<dbReference type="PIR" id="B64739">
    <property type="entry name" value="B64739"/>
</dbReference>
<dbReference type="RefSeq" id="NP_414696.1">
    <property type="nucleotide sequence ID" value="NC_000913.3"/>
</dbReference>
<dbReference type="RefSeq" id="WP_000045315.1">
    <property type="nucleotide sequence ID" value="NZ_LN832404.1"/>
</dbReference>
<dbReference type="SMR" id="P23893"/>
<dbReference type="BioGRID" id="4260833">
    <property type="interactions" value="31"/>
</dbReference>
<dbReference type="BioGRID" id="851232">
    <property type="interactions" value="2"/>
</dbReference>
<dbReference type="DIP" id="DIP-9886N"/>
<dbReference type="FunCoup" id="P23893">
    <property type="interactions" value="786"/>
</dbReference>
<dbReference type="IntAct" id="P23893">
    <property type="interactions" value="2"/>
</dbReference>
<dbReference type="STRING" id="511145.b0154"/>
<dbReference type="jPOST" id="P23893"/>
<dbReference type="PaxDb" id="511145-b0154"/>
<dbReference type="EnsemblBacteria" id="AAC73265">
    <property type="protein sequence ID" value="AAC73265"/>
    <property type="gene ID" value="b0154"/>
</dbReference>
<dbReference type="GeneID" id="946892"/>
<dbReference type="KEGG" id="ecj:JW0150"/>
<dbReference type="KEGG" id="eco:b0154"/>
<dbReference type="KEGG" id="ecoc:C3026_00700"/>
<dbReference type="PATRIC" id="fig|1411691.4.peg.2126"/>
<dbReference type="EchoBASE" id="EB0427"/>
<dbReference type="eggNOG" id="COG0001">
    <property type="taxonomic scope" value="Bacteria"/>
</dbReference>
<dbReference type="HOGENOM" id="CLU_016922_1_5_6"/>
<dbReference type="InParanoid" id="P23893"/>
<dbReference type="OMA" id="WGPLIFG"/>
<dbReference type="OrthoDB" id="9801052at2"/>
<dbReference type="PhylomeDB" id="P23893"/>
<dbReference type="BioCyc" id="EcoCyc:GSAAMINOTRANS-MONOMER"/>
<dbReference type="BioCyc" id="MetaCyc:GSAAMINOTRANS-MONOMER"/>
<dbReference type="UniPathway" id="UPA00251">
    <property type="reaction ID" value="UER00317"/>
</dbReference>
<dbReference type="PRO" id="PR:P23893"/>
<dbReference type="Proteomes" id="UP000000625">
    <property type="component" value="Chromosome"/>
</dbReference>
<dbReference type="GO" id="GO:0005829">
    <property type="term" value="C:cytosol"/>
    <property type="evidence" value="ECO:0007005"/>
    <property type="project" value="UniProtKB"/>
</dbReference>
<dbReference type="GO" id="GO:0042286">
    <property type="term" value="F:glutamate-1-semialdehyde 2,1-aminomutase activity"/>
    <property type="evidence" value="ECO:0000314"/>
    <property type="project" value="EcoCyc"/>
</dbReference>
<dbReference type="GO" id="GO:0042803">
    <property type="term" value="F:protein homodimerization activity"/>
    <property type="evidence" value="ECO:0000314"/>
    <property type="project" value="EcoCyc"/>
</dbReference>
<dbReference type="GO" id="GO:0030170">
    <property type="term" value="F:pyridoxal phosphate binding"/>
    <property type="evidence" value="ECO:0000314"/>
    <property type="project" value="EcoCyc"/>
</dbReference>
<dbReference type="GO" id="GO:0008483">
    <property type="term" value="F:transaminase activity"/>
    <property type="evidence" value="ECO:0007669"/>
    <property type="project" value="InterPro"/>
</dbReference>
<dbReference type="GO" id="GO:0006782">
    <property type="term" value="P:protoporphyrinogen IX biosynthetic process"/>
    <property type="evidence" value="ECO:0007669"/>
    <property type="project" value="UniProtKB-UniRule"/>
</dbReference>
<dbReference type="CDD" id="cd00610">
    <property type="entry name" value="OAT_like"/>
    <property type="match status" value="1"/>
</dbReference>
<dbReference type="FunFam" id="3.40.640.10:FF:000021">
    <property type="entry name" value="Glutamate-1-semialdehyde 2,1-aminomutase"/>
    <property type="match status" value="1"/>
</dbReference>
<dbReference type="FunFam" id="3.90.1150.10:FF:000012">
    <property type="entry name" value="Glutamate-1-semialdehyde 2,1-aminomutase"/>
    <property type="match status" value="1"/>
</dbReference>
<dbReference type="Gene3D" id="3.90.1150.10">
    <property type="entry name" value="Aspartate Aminotransferase, domain 1"/>
    <property type="match status" value="1"/>
</dbReference>
<dbReference type="Gene3D" id="3.40.640.10">
    <property type="entry name" value="Type I PLP-dependent aspartate aminotransferase-like (Major domain)"/>
    <property type="match status" value="1"/>
</dbReference>
<dbReference type="HAMAP" id="MF_00375">
    <property type="entry name" value="HemL_aminotrans_3"/>
    <property type="match status" value="1"/>
</dbReference>
<dbReference type="InterPro" id="IPR004639">
    <property type="entry name" value="4pyrrol_synth_GluAld_NH2Trfase"/>
</dbReference>
<dbReference type="InterPro" id="IPR005814">
    <property type="entry name" value="Aminotrans_3"/>
</dbReference>
<dbReference type="InterPro" id="IPR049704">
    <property type="entry name" value="Aminotrans_3_PPA_site"/>
</dbReference>
<dbReference type="InterPro" id="IPR015424">
    <property type="entry name" value="PyrdxlP-dep_Trfase"/>
</dbReference>
<dbReference type="InterPro" id="IPR015421">
    <property type="entry name" value="PyrdxlP-dep_Trfase_major"/>
</dbReference>
<dbReference type="InterPro" id="IPR015422">
    <property type="entry name" value="PyrdxlP-dep_Trfase_small"/>
</dbReference>
<dbReference type="NCBIfam" id="TIGR00713">
    <property type="entry name" value="hemL"/>
    <property type="match status" value="1"/>
</dbReference>
<dbReference type="NCBIfam" id="NF000818">
    <property type="entry name" value="PRK00062.1"/>
    <property type="match status" value="1"/>
</dbReference>
<dbReference type="PANTHER" id="PTHR43713">
    <property type="entry name" value="GLUTAMATE-1-SEMIALDEHYDE 2,1-AMINOMUTASE"/>
    <property type="match status" value="1"/>
</dbReference>
<dbReference type="PANTHER" id="PTHR43713:SF3">
    <property type="entry name" value="GLUTAMATE-1-SEMIALDEHYDE 2,1-AMINOMUTASE 1, CHLOROPLASTIC-RELATED"/>
    <property type="match status" value="1"/>
</dbReference>
<dbReference type="Pfam" id="PF00202">
    <property type="entry name" value="Aminotran_3"/>
    <property type="match status" value="1"/>
</dbReference>
<dbReference type="SUPFAM" id="SSF53383">
    <property type="entry name" value="PLP-dependent transferases"/>
    <property type="match status" value="1"/>
</dbReference>
<dbReference type="PROSITE" id="PS00600">
    <property type="entry name" value="AA_TRANSFER_CLASS_3"/>
    <property type="match status" value="1"/>
</dbReference>
<feature type="chain" id="PRO_0000120408" description="Glutamate-1-semialdehyde 2,1-aminomutase">
    <location>
        <begin position="1"/>
        <end position="426"/>
    </location>
</feature>
<feature type="modified residue" description="N6-(pyridoxal phosphate)lysine" evidence="4">
    <location>
        <position position="265"/>
    </location>
</feature>
<feature type="mutagenesis site" description="2% of wild-type activity." evidence="2">
    <original>K</original>
    <variation>R</variation>
    <location>
        <position position="265"/>
    </location>
</feature>
<feature type="sequence conflict" description="In Ref. 1 and 2." evidence="4" ref="1 2">
    <original>S</original>
    <variation>R</variation>
    <location>
        <position position="2"/>
    </location>
</feature>
<feature type="sequence conflict" description="In Ref. 1 and 2." evidence="4" ref="1 2">
    <original>S</original>
    <variation>Q</variation>
    <location>
        <position position="9"/>
    </location>
</feature>
<gene>
    <name type="primary">hemL</name>
    <name type="synonym">gsa</name>
    <name type="synonym">popC</name>
    <name type="ordered locus">b0154</name>
    <name type="ordered locus">JW0150</name>
</gene>
<keyword id="KW-0963">Cytoplasm</keyword>
<keyword id="KW-0413">Isomerase</keyword>
<keyword id="KW-0627">Porphyrin biosynthesis</keyword>
<keyword id="KW-0663">Pyridoxal phosphate</keyword>
<keyword id="KW-1185">Reference proteome</keyword>
<organism>
    <name type="scientific">Escherichia coli (strain K12)</name>
    <dbReference type="NCBI Taxonomy" id="83333"/>
    <lineage>
        <taxon>Bacteria</taxon>
        <taxon>Pseudomonadati</taxon>
        <taxon>Pseudomonadota</taxon>
        <taxon>Gammaproteobacteria</taxon>
        <taxon>Enterobacterales</taxon>
        <taxon>Enterobacteriaceae</taxon>
        <taxon>Escherichia</taxon>
    </lineage>
</organism>
<evidence type="ECO:0000269" key="1">
    <source>
    </source>
</evidence>
<evidence type="ECO:0000269" key="2">
    <source>
    </source>
</evidence>
<evidence type="ECO:0000269" key="3">
    <source>
    </source>
</evidence>
<evidence type="ECO:0000305" key="4"/>
<sequence length="426" mass="45366">MSKSENLYSAARELIPGGVNSPVRAFTGVGGTPLFIEKADGAYLYDVDGKAYIDYVGSWGPMVLGHNHPAIRNAVIEAAERGLSFGAPTEMEVKMAQLVTELVPTMDMVRMVNSGTEATMSAIRLARGFTGRDKIIKFEGCYHGHADCLLVKAGSGALTLGQPNSPGVPADFAKYTLTCTYNDLASVRAAFEQYPQEIACIIVEPVAGNMNCVPPLPEFLPGLRALCDEFGALLIIDEVMTGFRVALAGAQDYYGVVPDLTCLGKIIGGGMPVGAFGGRRDVMDALAPTGPVYQAGTLSGNPIAMAAGFACLNEVAQPGVHETLDELTTRLAEGLLEAAEEAGIPLVVNHVGGMFGIFFTDAESVTCYQDVMACDVERFKRFFHMMLDEGVYLAPSAFEAGFMSVAHSMEDINNTIDAARRVFAKL</sequence>
<comment type="function">
    <text evidence="2 3">Aminomutase that catalyzes the transfer of the amine group on carbon 2 of glutamate 1-semialdehyde to the adjacent carbon 1 to form 5-aminolevulinate.</text>
</comment>
<comment type="catalytic activity">
    <reaction evidence="2 3">
        <text>(S)-4-amino-5-oxopentanoate = 5-aminolevulinate</text>
        <dbReference type="Rhea" id="RHEA:14265"/>
        <dbReference type="ChEBI" id="CHEBI:57501"/>
        <dbReference type="ChEBI" id="CHEBI:356416"/>
        <dbReference type="EC" id="5.4.3.8"/>
    </reaction>
    <physiologicalReaction direction="left-to-right" evidence="2 3">
        <dbReference type="Rhea" id="RHEA:14266"/>
    </physiologicalReaction>
</comment>
<comment type="cofactor">
    <cofactor evidence="2 3">
        <name>pyridoxal 5'-phosphate</name>
        <dbReference type="ChEBI" id="CHEBI:597326"/>
    </cofactor>
</comment>
<comment type="pathway">
    <text>Porphyrin-containing compound metabolism; protoporphyrin-IX biosynthesis; 5-aminolevulinate from L-glutamyl-tRNA(Glu): step 2/2.</text>
</comment>
<comment type="subunit">
    <text evidence="3">Homodimer.</text>
</comment>
<comment type="interaction">
    <interactant intactId="EBI-909193">
        <id>P23893</id>
    </interactant>
    <interactant intactId="EBI-1115389">
        <id>P0ACL5</id>
        <label>glcC</label>
    </interactant>
    <organismsDiffer>false</organismsDiffer>
    <experiments>4</experiments>
</comment>
<comment type="subcellular location">
    <subcellularLocation>
        <location evidence="4">Cytoplasm</location>
    </subcellularLocation>
</comment>
<comment type="induction">
    <text evidence="1">Induced by low extracellular levels of magnesium via the PhoQ/PhoP two-component regulatory system.</text>
</comment>
<comment type="similarity">
    <text evidence="4">Belongs to the class-III pyridoxal-phosphate-dependent aminotransferase family. HemL subfamily.</text>
</comment>
<reference key="1">
    <citation type="journal article" date="1991" name="Mol. Gen. Genet.">
        <title>Structural genes of glutamate 1-semialdehyde aminotransferase for porphyrin synthesis in a cyanobacterium and Escherichia coli.</title>
        <authorList>
            <person name="Grimm B."/>
            <person name="Bull A."/>
            <person name="Breu V."/>
        </authorList>
    </citation>
    <scope>NUCLEOTIDE SEQUENCE [GENOMIC DNA]</scope>
</reference>
<reference key="2">
    <citation type="journal article" date="1994" name="Nucleic Acids Res.">
        <title>Systematic sequencing of the Escherichia coli genome: analysis of the 2.4-4.1 min (110,917-193,643 bp) region.</title>
        <authorList>
            <person name="Fujita N."/>
            <person name="Mori H."/>
            <person name="Yura T."/>
            <person name="Ishihama A."/>
        </authorList>
    </citation>
    <scope>NUCLEOTIDE SEQUENCE [LARGE SCALE GENOMIC DNA]</scope>
    <source>
        <strain>K12 / W3110 / ATCC 27325 / DSM 5911</strain>
    </source>
</reference>
<reference key="3">
    <citation type="submission" date="1997-01" db="EMBL/GenBank/DDBJ databases">
        <title>Sequence of minutes 4-25 of Escherichia coli.</title>
        <authorList>
            <person name="Chung E."/>
            <person name="Allen E."/>
            <person name="Araujo R."/>
            <person name="Aparicio A.M."/>
            <person name="Davis K."/>
            <person name="Duncan M."/>
            <person name="Federspiel N."/>
            <person name="Hyman R."/>
            <person name="Kalman S."/>
            <person name="Komp C."/>
            <person name="Kurdi O."/>
            <person name="Lew H."/>
            <person name="Lin D."/>
            <person name="Namath A."/>
            <person name="Oefner P."/>
            <person name="Roberts D."/>
            <person name="Schramm S."/>
            <person name="Davis R.W."/>
        </authorList>
    </citation>
    <scope>NUCLEOTIDE SEQUENCE [LARGE SCALE GENOMIC DNA]</scope>
    <source>
        <strain>K12 / MG1655 / ATCC 47076</strain>
    </source>
</reference>
<reference key="4">
    <citation type="journal article" date="1997" name="Science">
        <title>The complete genome sequence of Escherichia coli K-12.</title>
        <authorList>
            <person name="Blattner F.R."/>
            <person name="Plunkett G. III"/>
            <person name="Bloch C.A."/>
            <person name="Perna N.T."/>
            <person name="Burland V."/>
            <person name="Riley M."/>
            <person name="Collado-Vides J."/>
            <person name="Glasner J.D."/>
            <person name="Rode C.K."/>
            <person name="Mayhew G.F."/>
            <person name="Gregor J."/>
            <person name="Davis N.W."/>
            <person name="Kirkpatrick H.A."/>
            <person name="Goeden M.A."/>
            <person name="Rose D.J."/>
            <person name="Mau B."/>
            <person name="Shao Y."/>
        </authorList>
    </citation>
    <scope>NUCLEOTIDE SEQUENCE [LARGE SCALE GENOMIC DNA]</scope>
    <source>
        <strain>K12 / MG1655 / ATCC 47076</strain>
    </source>
</reference>
<reference key="5">
    <citation type="journal article" date="2006" name="Mol. Syst. Biol.">
        <title>Highly accurate genome sequences of Escherichia coli K-12 strains MG1655 and W3110.</title>
        <authorList>
            <person name="Hayashi K."/>
            <person name="Morooka N."/>
            <person name="Yamamoto Y."/>
            <person name="Fujita K."/>
            <person name="Isono K."/>
            <person name="Choi S."/>
            <person name="Ohtsubo E."/>
            <person name="Baba T."/>
            <person name="Wanner B.L."/>
            <person name="Mori H."/>
            <person name="Horiuchi T."/>
        </authorList>
    </citation>
    <scope>NUCLEOTIDE SEQUENCE [LARGE SCALE GENOMIC DNA]</scope>
    <scope>SEQUENCE REVISION TO 2 AND 9</scope>
    <source>
        <strain>K12 / W3110 / ATCC 27325 / DSM 5911</strain>
    </source>
</reference>
<reference key="6">
    <citation type="journal article" date="1991" name="J. Bacteriol.">
        <title>The Escherichia coli hemL gene encodes glutamate 1-semialdehyde aminotransferase.</title>
        <authorList>
            <person name="Ilag L.L."/>
            <person name="Jahn D."/>
            <person name="Eggertsson G."/>
            <person name="Soell D."/>
        </authorList>
    </citation>
    <scope>FUNCTION</scope>
    <scope>CATALYTIC ACTIVITY</scope>
    <scope>COFACTOR</scope>
    <scope>SUBUNIT</scope>
</reference>
<reference key="7">
    <citation type="journal article" date="1992" name="Biochemistry">
        <title>Activity and spectroscopic properties of the Escherichia coli glutamate 1-semialdehyde aminotransferase and the putative active site mutant K265R.</title>
        <authorList>
            <person name="Ilag L.L."/>
            <person name="Jahn D."/>
        </authorList>
    </citation>
    <scope>FUNCTION</scope>
    <scope>CATALYTIC ACTIVITY</scope>
    <scope>COFACTOR</scope>
    <scope>MUTAGENESIS OF LYS-265</scope>
</reference>
<reference key="8">
    <citation type="journal article" date="2003" name="J. Bacteriol.">
        <title>Identification and molecular characterization of the Mg2+ stimulon of Escherichia coli.</title>
        <authorList>
            <person name="Minagawa S."/>
            <person name="Ogasawara H."/>
            <person name="Kato A."/>
            <person name="Yamamoto K."/>
            <person name="Eguchi Y."/>
            <person name="Oshima T."/>
            <person name="Mori H."/>
            <person name="Ishihama A."/>
            <person name="Utsumi R."/>
        </authorList>
    </citation>
    <scope>INDUCTION</scope>
    <source>
        <strain>K12</strain>
    </source>
</reference>
<name>GSA_ECOLI</name>
<protein>
    <recommendedName>
        <fullName>Glutamate-1-semialdehyde 2,1-aminomutase</fullName>
        <shortName>GSA</shortName>
        <ecNumber evidence="2 3">5.4.3.8</ecNumber>
    </recommendedName>
    <alternativeName>
        <fullName>Glutamate-1-semialdehyde aminotransferase</fullName>
        <shortName>GSA-AT</shortName>
    </alternativeName>
</protein>
<accession>P23893</accession>
<accession>P78277</accession>